<evidence type="ECO:0000255" key="1">
    <source>
        <dbReference type="HAMAP-Rule" id="MF_00061"/>
    </source>
</evidence>
<sequence length="284" mass="30720">MPAAISRNWPAPAKLNLFLHINGRRADGYHALQTLFQFIDCCDMLDFKVTETPELILHSNMSGVVADSDNLILRAAKSLQQTTGFNGGAEIWLDKRLPMGGGLGGGSSDAATTLVALNKLWHTQLSTEELAKIGLKLGADIPVFIHGFAAFAEGVGERLQAVNPSEPWYLVIAPDAHVSTADVFQDPLLPRETPKLAIDTLMSQPWANDCQKLVVSKYPQVAKALGWLLEYAPSRMTGTGACVFGEFTQQQQALAALAKLPSEMQGFVAQGMNLSPLITRLSHP</sequence>
<organism>
    <name type="scientific">Shewanella baltica (strain OS155 / ATCC BAA-1091)</name>
    <dbReference type="NCBI Taxonomy" id="325240"/>
    <lineage>
        <taxon>Bacteria</taxon>
        <taxon>Pseudomonadati</taxon>
        <taxon>Pseudomonadota</taxon>
        <taxon>Gammaproteobacteria</taxon>
        <taxon>Alteromonadales</taxon>
        <taxon>Shewanellaceae</taxon>
        <taxon>Shewanella</taxon>
    </lineage>
</organism>
<protein>
    <recommendedName>
        <fullName evidence="1">4-diphosphocytidyl-2-C-methyl-D-erythritol kinase</fullName>
        <shortName evidence="1">CMK</shortName>
        <ecNumber evidence="1">2.7.1.148</ecNumber>
    </recommendedName>
    <alternativeName>
        <fullName evidence="1">4-(cytidine-5'-diphospho)-2-C-methyl-D-erythritol kinase</fullName>
    </alternativeName>
</protein>
<gene>
    <name evidence="1" type="primary">ispE</name>
    <name type="ordered locus">Sbal_0693</name>
</gene>
<feature type="chain" id="PRO_1000007886" description="4-diphosphocytidyl-2-C-methyl-D-erythritol kinase">
    <location>
        <begin position="1"/>
        <end position="284"/>
    </location>
</feature>
<feature type="active site" evidence="1">
    <location>
        <position position="14"/>
    </location>
</feature>
<feature type="active site" evidence="1">
    <location>
        <position position="140"/>
    </location>
</feature>
<feature type="binding site" evidence="1">
    <location>
        <begin position="98"/>
        <end position="108"/>
    </location>
    <ligand>
        <name>ATP</name>
        <dbReference type="ChEBI" id="CHEBI:30616"/>
    </ligand>
</feature>
<reference key="1">
    <citation type="submission" date="2007-02" db="EMBL/GenBank/DDBJ databases">
        <title>Complete sequence of chromosome of Shewanella baltica OS155.</title>
        <authorList>
            <consortium name="US DOE Joint Genome Institute"/>
            <person name="Copeland A."/>
            <person name="Lucas S."/>
            <person name="Lapidus A."/>
            <person name="Barry K."/>
            <person name="Detter J.C."/>
            <person name="Glavina del Rio T."/>
            <person name="Hammon N."/>
            <person name="Israni S."/>
            <person name="Dalin E."/>
            <person name="Tice H."/>
            <person name="Pitluck S."/>
            <person name="Sims D.R."/>
            <person name="Brettin T."/>
            <person name="Bruce D."/>
            <person name="Han C."/>
            <person name="Tapia R."/>
            <person name="Brainard J."/>
            <person name="Schmutz J."/>
            <person name="Larimer F."/>
            <person name="Land M."/>
            <person name="Hauser L."/>
            <person name="Kyrpides N."/>
            <person name="Mikhailova N."/>
            <person name="Brettar I."/>
            <person name="Klappenbach J."/>
            <person name="Konstantinidis K."/>
            <person name="Rodrigues J."/>
            <person name="Tiedje J."/>
            <person name="Richardson P."/>
        </authorList>
    </citation>
    <scope>NUCLEOTIDE SEQUENCE [LARGE SCALE GENOMIC DNA]</scope>
    <source>
        <strain>OS155 / ATCC BAA-1091</strain>
    </source>
</reference>
<comment type="function">
    <text evidence="1">Catalyzes the phosphorylation of the position 2 hydroxy group of 4-diphosphocytidyl-2C-methyl-D-erythritol.</text>
</comment>
<comment type="catalytic activity">
    <reaction evidence="1">
        <text>4-CDP-2-C-methyl-D-erythritol + ATP = 4-CDP-2-C-methyl-D-erythritol 2-phosphate + ADP + H(+)</text>
        <dbReference type="Rhea" id="RHEA:18437"/>
        <dbReference type="ChEBI" id="CHEBI:15378"/>
        <dbReference type="ChEBI" id="CHEBI:30616"/>
        <dbReference type="ChEBI" id="CHEBI:57823"/>
        <dbReference type="ChEBI" id="CHEBI:57919"/>
        <dbReference type="ChEBI" id="CHEBI:456216"/>
        <dbReference type="EC" id="2.7.1.148"/>
    </reaction>
</comment>
<comment type="pathway">
    <text evidence="1">Isoprenoid biosynthesis; isopentenyl diphosphate biosynthesis via DXP pathway; isopentenyl diphosphate from 1-deoxy-D-xylulose 5-phosphate: step 3/6.</text>
</comment>
<comment type="similarity">
    <text evidence="1">Belongs to the GHMP kinase family. IspE subfamily.</text>
</comment>
<accession>A3D0F8</accession>
<keyword id="KW-0067">ATP-binding</keyword>
<keyword id="KW-0414">Isoprene biosynthesis</keyword>
<keyword id="KW-0418">Kinase</keyword>
<keyword id="KW-0547">Nucleotide-binding</keyword>
<keyword id="KW-1185">Reference proteome</keyword>
<keyword id="KW-0808">Transferase</keyword>
<name>ISPE_SHEB5</name>
<proteinExistence type="inferred from homology"/>
<dbReference type="EC" id="2.7.1.148" evidence="1"/>
<dbReference type="EMBL" id="CP000563">
    <property type="protein sequence ID" value="ABN60221.1"/>
    <property type="molecule type" value="Genomic_DNA"/>
</dbReference>
<dbReference type="RefSeq" id="WP_011845825.1">
    <property type="nucleotide sequence ID" value="NC_009052.1"/>
</dbReference>
<dbReference type="SMR" id="A3D0F8"/>
<dbReference type="STRING" id="325240.Sbal_0693"/>
<dbReference type="KEGG" id="sbl:Sbal_0693"/>
<dbReference type="HOGENOM" id="CLU_053057_3_0_6"/>
<dbReference type="OrthoDB" id="9809438at2"/>
<dbReference type="UniPathway" id="UPA00056">
    <property type="reaction ID" value="UER00094"/>
</dbReference>
<dbReference type="Proteomes" id="UP000001557">
    <property type="component" value="Chromosome"/>
</dbReference>
<dbReference type="GO" id="GO:0050515">
    <property type="term" value="F:4-(cytidine 5'-diphospho)-2-C-methyl-D-erythritol kinase activity"/>
    <property type="evidence" value="ECO:0007669"/>
    <property type="project" value="UniProtKB-UniRule"/>
</dbReference>
<dbReference type="GO" id="GO:0005524">
    <property type="term" value="F:ATP binding"/>
    <property type="evidence" value="ECO:0007669"/>
    <property type="project" value="UniProtKB-UniRule"/>
</dbReference>
<dbReference type="GO" id="GO:0019288">
    <property type="term" value="P:isopentenyl diphosphate biosynthetic process, methylerythritol 4-phosphate pathway"/>
    <property type="evidence" value="ECO:0007669"/>
    <property type="project" value="UniProtKB-UniRule"/>
</dbReference>
<dbReference type="GO" id="GO:0016114">
    <property type="term" value="P:terpenoid biosynthetic process"/>
    <property type="evidence" value="ECO:0007669"/>
    <property type="project" value="InterPro"/>
</dbReference>
<dbReference type="FunFam" id="3.30.230.10:FF:000022">
    <property type="entry name" value="4-diphosphocytidyl-2-C-methyl-D-erythritol kinase"/>
    <property type="match status" value="1"/>
</dbReference>
<dbReference type="Gene3D" id="3.30.230.10">
    <property type="match status" value="1"/>
</dbReference>
<dbReference type="Gene3D" id="3.30.70.890">
    <property type="entry name" value="GHMP kinase, C-terminal domain"/>
    <property type="match status" value="1"/>
</dbReference>
<dbReference type="HAMAP" id="MF_00061">
    <property type="entry name" value="IspE"/>
    <property type="match status" value="1"/>
</dbReference>
<dbReference type="InterPro" id="IPR013750">
    <property type="entry name" value="GHMP_kinase_C_dom"/>
</dbReference>
<dbReference type="InterPro" id="IPR036554">
    <property type="entry name" value="GHMP_kinase_C_sf"/>
</dbReference>
<dbReference type="InterPro" id="IPR006204">
    <property type="entry name" value="GHMP_kinase_N_dom"/>
</dbReference>
<dbReference type="InterPro" id="IPR004424">
    <property type="entry name" value="IspE"/>
</dbReference>
<dbReference type="InterPro" id="IPR020568">
    <property type="entry name" value="Ribosomal_Su5_D2-typ_SF"/>
</dbReference>
<dbReference type="InterPro" id="IPR014721">
    <property type="entry name" value="Ribsml_uS5_D2-typ_fold_subgr"/>
</dbReference>
<dbReference type="NCBIfam" id="TIGR00154">
    <property type="entry name" value="ispE"/>
    <property type="match status" value="1"/>
</dbReference>
<dbReference type="PANTHER" id="PTHR43527">
    <property type="entry name" value="4-DIPHOSPHOCYTIDYL-2-C-METHYL-D-ERYTHRITOL KINASE, CHLOROPLASTIC"/>
    <property type="match status" value="1"/>
</dbReference>
<dbReference type="PANTHER" id="PTHR43527:SF2">
    <property type="entry name" value="4-DIPHOSPHOCYTIDYL-2-C-METHYL-D-ERYTHRITOL KINASE, CHLOROPLASTIC"/>
    <property type="match status" value="1"/>
</dbReference>
<dbReference type="Pfam" id="PF08544">
    <property type="entry name" value="GHMP_kinases_C"/>
    <property type="match status" value="1"/>
</dbReference>
<dbReference type="Pfam" id="PF00288">
    <property type="entry name" value="GHMP_kinases_N"/>
    <property type="match status" value="1"/>
</dbReference>
<dbReference type="PIRSF" id="PIRSF010376">
    <property type="entry name" value="IspE"/>
    <property type="match status" value="1"/>
</dbReference>
<dbReference type="SUPFAM" id="SSF55060">
    <property type="entry name" value="GHMP Kinase, C-terminal domain"/>
    <property type="match status" value="1"/>
</dbReference>
<dbReference type="SUPFAM" id="SSF54211">
    <property type="entry name" value="Ribosomal protein S5 domain 2-like"/>
    <property type="match status" value="1"/>
</dbReference>